<dbReference type="EC" id="4.1.1.15"/>
<dbReference type="EMBL" id="AL591983">
    <property type="protein sequence ID" value="CAD00512.1"/>
    <property type="molecule type" value="Genomic_DNA"/>
</dbReference>
<dbReference type="PIR" id="AB1379">
    <property type="entry name" value="AB1379"/>
</dbReference>
<dbReference type="RefSeq" id="NP_465957.1">
    <property type="nucleotide sequence ID" value="NC_003210.1"/>
</dbReference>
<dbReference type="RefSeq" id="WP_010989992.1">
    <property type="nucleotide sequence ID" value="NZ_CP149495.1"/>
</dbReference>
<dbReference type="SMR" id="Q8Y4K4"/>
<dbReference type="STRING" id="169963.gene:17595144"/>
<dbReference type="PaxDb" id="169963-lmo2434"/>
<dbReference type="DNASU" id="987419"/>
<dbReference type="EnsemblBacteria" id="CAD00512">
    <property type="protein sequence ID" value="CAD00512"/>
    <property type="gene ID" value="CAD00512"/>
</dbReference>
<dbReference type="GeneID" id="987419"/>
<dbReference type="KEGG" id="lmo:lmo2434"/>
<dbReference type="PATRIC" id="fig|169963.11.peg.2492"/>
<dbReference type="eggNOG" id="COG0076">
    <property type="taxonomic scope" value="Bacteria"/>
</dbReference>
<dbReference type="HOGENOM" id="CLU_019582_2_1_9"/>
<dbReference type="OrthoDB" id="9803665at2"/>
<dbReference type="PhylomeDB" id="Q8Y4K4"/>
<dbReference type="BioCyc" id="LMON169963:LMO2434-MONOMER"/>
<dbReference type="Proteomes" id="UP000000817">
    <property type="component" value="Chromosome"/>
</dbReference>
<dbReference type="GO" id="GO:0005829">
    <property type="term" value="C:cytosol"/>
    <property type="evidence" value="ECO:0000318"/>
    <property type="project" value="GO_Central"/>
</dbReference>
<dbReference type="GO" id="GO:0004058">
    <property type="term" value="F:aromatic-L-amino-acid decarboxylase activity"/>
    <property type="evidence" value="ECO:0007669"/>
    <property type="project" value="UniProtKB-ARBA"/>
</dbReference>
<dbReference type="GO" id="GO:0004351">
    <property type="term" value="F:glutamate decarboxylase activity"/>
    <property type="evidence" value="ECO:0000318"/>
    <property type="project" value="GO_Central"/>
</dbReference>
<dbReference type="GO" id="GO:0030170">
    <property type="term" value="F:pyridoxal phosphate binding"/>
    <property type="evidence" value="ECO:0007669"/>
    <property type="project" value="InterPro"/>
</dbReference>
<dbReference type="GO" id="GO:0006538">
    <property type="term" value="P:glutamate catabolic process"/>
    <property type="evidence" value="ECO:0000318"/>
    <property type="project" value="GO_Central"/>
</dbReference>
<dbReference type="CDD" id="cd06450">
    <property type="entry name" value="DOPA_deC_like"/>
    <property type="match status" value="1"/>
</dbReference>
<dbReference type="FunFam" id="3.40.640.10:FF:000017">
    <property type="entry name" value="Glutamate decarboxylase"/>
    <property type="match status" value="1"/>
</dbReference>
<dbReference type="FunFam" id="4.10.280.50:FF:000001">
    <property type="entry name" value="Glutamate decarboxylase"/>
    <property type="match status" value="1"/>
</dbReference>
<dbReference type="Gene3D" id="3.90.1150.160">
    <property type="match status" value="1"/>
</dbReference>
<dbReference type="Gene3D" id="4.10.280.50">
    <property type="match status" value="1"/>
</dbReference>
<dbReference type="Gene3D" id="3.40.640.10">
    <property type="entry name" value="Type I PLP-dependent aspartate aminotransferase-like (Major domain)"/>
    <property type="match status" value="1"/>
</dbReference>
<dbReference type="InterPro" id="IPR010107">
    <property type="entry name" value="Glutamate_decarboxylase"/>
</dbReference>
<dbReference type="InterPro" id="IPR002129">
    <property type="entry name" value="PyrdxlP-dep_de-COase"/>
</dbReference>
<dbReference type="InterPro" id="IPR015424">
    <property type="entry name" value="PyrdxlP-dep_Trfase"/>
</dbReference>
<dbReference type="InterPro" id="IPR015421">
    <property type="entry name" value="PyrdxlP-dep_Trfase_major"/>
</dbReference>
<dbReference type="NCBIfam" id="TIGR01788">
    <property type="entry name" value="Glu-decarb-GAD"/>
    <property type="match status" value="1"/>
</dbReference>
<dbReference type="PANTHER" id="PTHR43321">
    <property type="entry name" value="GLUTAMATE DECARBOXYLASE"/>
    <property type="match status" value="1"/>
</dbReference>
<dbReference type="PANTHER" id="PTHR43321:SF3">
    <property type="entry name" value="GLUTAMATE DECARBOXYLASE"/>
    <property type="match status" value="1"/>
</dbReference>
<dbReference type="Pfam" id="PF00282">
    <property type="entry name" value="Pyridoxal_deC"/>
    <property type="match status" value="1"/>
</dbReference>
<dbReference type="SUPFAM" id="SSF53383">
    <property type="entry name" value="PLP-dependent transferases"/>
    <property type="match status" value="1"/>
</dbReference>
<comment type="catalytic activity">
    <reaction>
        <text>L-glutamate + H(+) = 4-aminobutanoate + CO2</text>
        <dbReference type="Rhea" id="RHEA:17785"/>
        <dbReference type="ChEBI" id="CHEBI:15378"/>
        <dbReference type="ChEBI" id="CHEBI:16526"/>
        <dbReference type="ChEBI" id="CHEBI:29985"/>
        <dbReference type="ChEBI" id="CHEBI:59888"/>
        <dbReference type="EC" id="4.1.1.15"/>
    </reaction>
</comment>
<comment type="cofactor">
    <cofactor evidence="1">
        <name>pyridoxal 5'-phosphate</name>
        <dbReference type="ChEBI" id="CHEBI:597326"/>
    </cofactor>
</comment>
<comment type="similarity">
    <text evidence="2">Belongs to the group II decarboxylase family.</text>
</comment>
<gene>
    <name type="ordered locus">lmo2434</name>
</gene>
<sequence length="467" mass="53640">MLYSEDDKRKQESYRIPLFGSEEESTSIPKYVLKKEPMEPRIAYQLVKDQLMDEGNARQNLATFCQTYMEKEAEILMAETLEKNAIDKSEYPQTAELENRCVNILADLWNAPKDMSYLGTSTVGSSEACMLGGLAMKFRWRNNAEKRGLDIQAKRPNLIISSGYQVCWEKFCVYWDVDMRVVPMDKNHLSLDVDKVFDLVDEYTIGVVGILGITYTGKFDDIQLLDEKVEAYNETNEHQLVIHIDGASGAMFTPFVNPELPWDFRLKNVVSINTSGHKYGLVYPGVGWILWKDKEYLPKELIFEVSYLGGSMPTMAINFSRSASQIIGQYYNFLRYGFEGYREIHEKTKKTAIYLAKTVEKSGYFEIINDGANLPIVCYKMKEGLDVEWTLYDLADQLLMKGWQVPAYPLPADLSDTIIQRFVCRADLGYNVAEEFAADFADAIHNLEHARVLYHDKERNDSYGFTH</sequence>
<proteinExistence type="inferred from homology"/>
<feature type="chain" id="PRO_0000146992" description="Probable glutamate decarboxylase gamma">
    <location>
        <begin position="1"/>
        <end position="467"/>
    </location>
</feature>
<feature type="modified residue" description="N6-(pyridoxal phosphate)lysine" evidence="1">
    <location>
        <position position="278"/>
    </location>
</feature>
<organism>
    <name type="scientific">Listeria monocytogenes serovar 1/2a (strain ATCC BAA-679 / EGD-e)</name>
    <dbReference type="NCBI Taxonomy" id="169963"/>
    <lineage>
        <taxon>Bacteria</taxon>
        <taxon>Bacillati</taxon>
        <taxon>Bacillota</taxon>
        <taxon>Bacilli</taxon>
        <taxon>Bacillales</taxon>
        <taxon>Listeriaceae</taxon>
        <taxon>Listeria</taxon>
    </lineage>
</organism>
<evidence type="ECO:0000250" key="1"/>
<evidence type="ECO:0000305" key="2"/>
<name>DCEC_LISMO</name>
<keyword id="KW-0210">Decarboxylase</keyword>
<keyword id="KW-0456">Lyase</keyword>
<keyword id="KW-0663">Pyridoxal phosphate</keyword>
<keyword id="KW-1185">Reference proteome</keyword>
<protein>
    <recommendedName>
        <fullName>Probable glutamate decarboxylase gamma</fullName>
        <shortName>GAD-gamma</shortName>
        <ecNumber>4.1.1.15</ecNumber>
    </recommendedName>
</protein>
<reference key="1">
    <citation type="journal article" date="2001" name="Science">
        <title>Comparative genomics of Listeria species.</title>
        <authorList>
            <person name="Glaser P."/>
            <person name="Frangeul L."/>
            <person name="Buchrieser C."/>
            <person name="Rusniok C."/>
            <person name="Amend A."/>
            <person name="Baquero F."/>
            <person name="Berche P."/>
            <person name="Bloecker H."/>
            <person name="Brandt P."/>
            <person name="Chakraborty T."/>
            <person name="Charbit A."/>
            <person name="Chetouani F."/>
            <person name="Couve E."/>
            <person name="de Daruvar A."/>
            <person name="Dehoux P."/>
            <person name="Domann E."/>
            <person name="Dominguez-Bernal G."/>
            <person name="Duchaud E."/>
            <person name="Durant L."/>
            <person name="Dussurget O."/>
            <person name="Entian K.-D."/>
            <person name="Fsihi H."/>
            <person name="Garcia-del Portillo F."/>
            <person name="Garrido P."/>
            <person name="Gautier L."/>
            <person name="Goebel W."/>
            <person name="Gomez-Lopez N."/>
            <person name="Hain T."/>
            <person name="Hauf J."/>
            <person name="Jackson D."/>
            <person name="Jones L.-M."/>
            <person name="Kaerst U."/>
            <person name="Kreft J."/>
            <person name="Kuhn M."/>
            <person name="Kunst F."/>
            <person name="Kurapkat G."/>
            <person name="Madueno E."/>
            <person name="Maitournam A."/>
            <person name="Mata Vicente J."/>
            <person name="Ng E."/>
            <person name="Nedjari H."/>
            <person name="Nordsiek G."/>
            <person name="Novella S."/>
            <person name="de Pablos B."/>
            <person name="Perez-Diaz J.-C."/>
            <person name="Purcell R."/>
            <person name="Remmel B."/>
            <person name="Rose M."/>
            <person name="Schlueter T."/>
            <person name="Simoes N."/>
            <person name="Tierrez A."/>
            <person name="Vazquez-Boland J.-A."/>
            <person name="Voss H."/>
            <person name="Wehland J."/>
            <person name="Cossart P."/>
        </authorList>
    </citation>
    <scope>NUCLEOTIDE SEQUENCE [LARGE SCALE GENOMIC DNA]</scope>
    <source>
        <strain>ATCC BAA-679 / EGD-e</strain>
    </source>
</reference>
<accession>Q8Y4K4</accession>